<protein>
    <recommendedName>
        <fullName>Probable inactive tRNA-specific adenosine deaminase-like protein 3</fullName>
    </recommendedName>
    <alternativeName>
        <fullName>tRNA-specific adenosine-34 deaminase subunit adat3</fullName>
    </alternativeName>
</protein>
<evidence type="ECO:0000250" key="1"/>
<evidence type="ECO:0000255" key="2">
    <source>
        <dbReference type="PROSITE-ProRule" id="PRU01083"/>
    </source>
</evidence>
<evidence type="ECO:0000305" key="3"/>
<comment type="cofactor">
    <cofactor evidence="1">
        <name>Zn(2+)</name>
        <dbReference type="ChEBI" id="CHEBI:29105"/>
    </cofactor>
</comment>
<comment type="similarity">
    <text evidence="3">Belongs to the cytidine and deoxycytidylate deaminase family. ADAT3 subfamily.</text>
</comment>
<comment type="caution">
    <text evidence="3">Val-221 is present instead of the conserved Glu which is an active site in the cytidine and deoxycytidylate deaminase family of enzymes. It is suggested that this protein may act as a regulatory subunit.</text>
</comment>
<reference key="1">
    <citation type="journal article" date="2013" name="Nature">
        <title>The zebrafish reference genome sequence and its relationship to the human genome.</title>
        <authorList>
            <person name="Howe K."/>
            <person name="Clark M.D."/>
            <person name="Torroja C.F."/>
            <person name="Torrance J."/>
            <person name="Berthelot C."/>
            <person name="Muffato M."/>
            <person name="Collins J.E."/>
            <person name="Humphray S."/>
            <person name="McLaren K."/>
            <person name="Matthews L."/>
            <person name="McLaren S."/>
            <person name="Sealy I."/>
            <person name="Caccamo M."/>
            <person name="Churcher C."/>
            <person name="Scott C."/>
            <person name="Barrett J.C."/>
            <person name="Koch R."/>
            <person name="Rauch G.J."/>
            <person name="White S."/>
            <person name="Chow W."/>
            <person name="Kilian B."/>
            <person name="Quintais L.T."/>
            <person name="Guerra-Assuncao J.A."/>
            <person name="Zhou Y."/>
            <person name="Gu Y."/>
            <person name="Yen J."/>
            <person name="Vogel J.H."/>
            <person name="Eyre T."/>
            <person name="Redmond S."/>
            <person name="Banerjee R."/>
            <person name="Chi J."/>
            <person name="Fu B."/>
            <person name="Langley E."/>
            <person name="Maguire S.F."/>
            <person name="Laird G.K."/>
            <person name="Lloyd D."/>
            <person name="Kenyon E."/>
            <person name="Donaldson S."/>
            <person name="Sehra H."/>
            <person name="Almeida-King J."/>
            <person name="Loveland J."/>
            <person name="Trevanion S."/>
            <person name="Jones M."/>
            <person name="Quail M."/>
            <person name="Willey D."/>
            <person name="Hunt A."/>
            <person name="Burton J."/>
            <person name="Sims S."/>
            <person name="McLay K."/>
            <person name="Plumb B."/>
            <person name="Davis J."/>
            <person name="Clee C."/>
            <person name="Oliver K."/>
            <person name="Clark R."/>
            <person name="Riddle C."/>
            <person name="Elliot D."/>
            <person name="Threadgold G."/>
            <person name="Harden G."/>
            <person name="Ware D."/>
            <person name="Begum S."/>
            <person name="Mortimore B."/>
            <person name="Kerry G."/>
            <person name="Heath P."/>
            <person name="Phillimore B."/>
            <person name="Tracey A."/>
            <person name="Corby N."/>
            <person name="Dunn M."/>
            <person name="Johnson C."/>
            <person name="Wood J."/>
            <person name="Clark S."/>
            <person name="Pelan S."/>
            <person name="Griffiths G."/>
            <person name="Smith M."/>
            <person name="Glithero R."/>
            <person name="Howden P."/>
            <person name="Barker N."/>
            <person name="Lloyd C."/>
            <person name="Stevens C."/>
            <person name="Harley J."/>
            <person name="Holt K."/>
            <person name="Panagiotidis G."/>
            <person name="Lovell J."/>
            <person name="Beasley H."/>
            <person name="Henderson C."/>
            <person name="Gordon D."/>
            <person name="Auger K."/>
            <person name="Wright D."/>
            <person name="Collins J."/>
            <person name="Raisen C."/>
            <person name="Dyer L."/>
            <person name="Leung K."/>
            <person name="Robertson L."/>
            <person name="Ambridge K."/>
            <person name="Leongamornlert D."/>
            <person name="McGuire S."/>
            <person name="Gilderthorp R."/>
            <person name="Griffiths C."/>
            <person name="Manthravadi D."/>
            <person name="Nichol S."/>
            <person name="Barker G."/>
            <person name="Whitehead S."/>
            <person name="Kay M."/>
            <person name="Brown J."/>
            <person name="Murnane C."/>
            <person name="Gray E."/>
            <person name="Humphries M."/>
            <person name="Sycamore N."/>
            <person name="Barker D."/>
            <person name="Saunders D."/>
            <person name="Wallis J."/>
            <person name="Babbage A."/>
            <person name="Hammond S."/>
            <person name="Mashreghi-Mohammadi M."/>
            <person name="Barr L."/>
            <person name="Martin S."/>
            <person name="Wray P."/>
            <person name="Ellington A."/>
            <person name="Matthews N."/>
            <person name="Ellwood M."/>
            <person name="Woodmansey R."/>
            <person name="Clark G."/>
            <person name="Cooper J."/>
            <person name="Tromans A."/>
            <person name="Grafham D."/>
            <person name="Skuce C."/>
            <person name="Pandian R."/>
            <person name="Andrews R."/>
            <person name="Harrison E."/>
            <person name="Kimberley A."/>
            <person name="Garnett J."/>
            <person name="Fosker N."/>
            <person name="Hall R."/>
            <person name="Garner P."/>
            <person name="Kelly D."/>
            <person name="Bird C."/>
            <person name="Palmer S."/>
            <person name="Gehring I."/>
            <person name="Berger A."/>
            <person name="Dooley C.M."/>
            <person name="Ersan-Urun Z."/>
            <person name="Eser C."/>
            <person name="Geiger H."/>
            <person name="Geisler M."/>
            <person name="Karotki L."/>
            <person name="Kirn A."/>
            <person name="Konantz J."/>
            <person name="Konantz M."/>
            <person name="Oberlander M."/>
            <person name="Rudolph-Geiger S."/>
            <person name="Teucke M."/>
            <person name="Lanz C."/>
            <person name="Raddatz G."/>
            <person name="Osoegawa K."/>
            <person name="Zhu B."/>
            <person name="Rapp A."/>
            <person name="Widaa S."/>
            <person name="Langford C."/>
            <person name="Yang F."/>
            <person name="Schuster S.C."/>
            <person name="Carter N.P."/>
            <person name="Harrow J."/>
            <person name="Ning Z."/>
            <person name="Herrero J."/>
            <person name="Searle S.M."/>
            <person name="Enright A."/>
            <person name="Geisler R."/>
            <person name="Plasterk R.H."/>
            <person name="Lee C."/>
            <person name="Westerfield M."/>
            <person name="de Jong P.J."/>
            <person name="Zon L.I."/>
            <person name="Postlethwait J.H."/>
            <person name="Nusslein-Volhard C."/>
            <person name="Hubbard T.J."/>
            <person name="Roest Crollius H."/>
            <person name="Rogers J."/>
            <person name="Stemple D.L."/>
        </authorList>
    </citation>
    <scope>NUCLEOTIDE SEQUENCE [LARGE SCALE GENOMIC DNA]</scope>
    <source>
        <strain>Tuebingen</strain>
    </source>
</reference>
<reference key="2">
    <citation type="submission" date="2004-11" db="EMBL/GenBank/DDBJ databases">
        <authorList>
            <consortium name="NIH - Zebrafish Gene Collection (ZGC) project"/>
        </authorList>
    </citation>
    <scope>NUCLEOTIDE SEQUENCE [LARGE SCALE MRNA]</scope>
    <source>
        <tissue>Ovary</tissue>
    </source>
</reference>
<proteinExistence type="evidence at transcript level"/>
<keyword id="KW-0479">Metal-binding</keyword>
<keyword id="KW-1185">Reference proteome</keyword>
<keyword id="KW-0819">tRNA processing</keyword>
<keyword id="KW-0862">Zinc</keyword>
<sequence length="336" mass="37683">MEPQAKRKKEMDDYDDTWEVLPVLSDEQSQDPELLPAYAAPILERRETSRLVKELSLIHPLPNLQHIKRVRPCKHKDSPHPLEVIVCLVSDVQCTDPKKVTLSHLLHTQCFNSNGLGDPFIVQIPANPPLTRPQFEKASKHWPTSFHEDKLVTFALKGQLFTAHQKTKMREYMCVAVKAAKSGRELGMDAVGAVIVDPKTEQIIAVAHDCKRGSHPLHHAVMVCIDLVACGQDGGAYNYEKYPACRFSCSNSVCDGKETGLPYICTGYDLYVTREPCVMCAMALVHSRISRVFYGASTADGAFGSRYKIHCQKDLNHRFEVFKGVMVNACEDLCKE</sequence>
<name>ADAT3_DANRE</name>
<gene>
    <name type="primary">adat3</name>
    <name type="ORF">si:busm1-72b14.5</name>
    <name type="ORF">si:dkey-204g5.2</name>
    <name type="ORF">zgc:103555</name>
</gene>
<accession>Q8JFW4</accession>
<accession>B0V342</accession>
<accession>Q8JFR8</accession>
<organism>
    <name type="scientific">Danio rerio</name>
    <name type="common">Zebrafish</name>
    <name type="synonym">Brachydanio rerio</name>
    <dbReference type="NCBI Taxonomy" id="7955"/>
    <lineage>
        <taxon>Eukaryota</taxon>
        <taxon>Metazoa</taxon>
        <taxon>Chordata</taxon>
        <taxon>Craniata</taxon>
        <taxon>Vertebrata</taxon>
        <taxon>Euteleostomi</taxon>
        <taxon>Actinopterygii</taxon>
        <taxon>Neopterygii</taxon>
        <taxon>Teleostei</taxon>
        <taxon>Ostariophysi</taxon>
        <taxon>Cypriniformes</taxon>
        <taxon>Danionidae</taxon>
        <taxon>Danioninae</taxon>
        <taxon>Danio</taxon>
    </lineage>
</organism>
<dbReference type="EMBL" id="AL591593">
    <property type="protein sequence ID" value="CAD43470.1"/>
    <property type="molecule type" value="Genomic_DNA"/>
</dbReference>
<dbReference type="EMBL" id="AL672217">
    <property type="protein sequence ID" value="CAD43442.1"/>
    <property type="molecule type" value="Genomic_DNA"/>
</dbReference>
<dbReference type="EMBL" id="CT737230">
    <property type="protein sequence ID" value="CAQ15728.1"/>
    <property type="molecule type" value="Genomic_DNA"/>
</dbReference>
<dbReference type="EMBL" id="BC085551">
    <property type="protein sequence ID" value="AAH85551.1"/>
    <property type="molecule type" value="mRNA"/>
</dbReference>
<dbReference type="SMR" id="Q8JFW4"/>
<dbReference type="FunCoup" id="Q8JFW4">
    <property type="interactions" value="717"/>
</dbReference>
<dbReference type="STRING" id="7955.ENSDARP00000018770"/>
<dbReference type="PaxDb" id="7955-ENSDARP00000018770"/>
<dbReference type="AGR" id="ZFIN:ZDB-GENE-030616-531"/>
<dbReference type="ZFIN" id="ZDB-GENE-030616-531">
    <property type="gene designation" value="adat3"/>
</dbReference>
<dbReference type="eggNOG" id="KOG2771">
    <property type="taxonomic scope" value="Eukaryota"/>
</dbReference>
<dbReference type="InParanoid" id="Q8JFW4"/>
<dbReference type="OrthoDB" id="3180714at2759"/>
<dbReference type="PhylomeDB" id="Q8JFW4"/>
<dbReference type="TreeFam" id="TF313277"/>
<dbReference type="PRO" id="PR:Q8JFW4"/>
<dbReference type="Proteomes" id="UP000000437">
    <property type="component" value="Unplaced"/>
</dbReference>
<dbReference type="GO" id="GO:0005737">
    <property type="term" value="C:cytoplasm"/>
    <property type="evidence" value="ECO:0000318"/>
    <property type="project" value="GO_Central"/>
</dbReference>
<dbReference type="GO" id="GO:0005634">
    <property type="term" value="C:nucleus"/>
    <property type="evidence" value="ECO:0000318"/>
    <property type="project" value="GO_Central"/>
</dbReference>
<dbReference type="GO" id="GO:0003824">
    <property type="term" value="F:catalytic activity"/>
    <property type="evidence" value="ECO:0007669"/>
    <property type="project" value="InterPro"/>
</dbReference>
<dbReference type="GO" id="GO:0046872">
    <property type="term" value="F:metal ion binding"/>
    <property type="evidence" value="ECO:0007669"/>
    <property type="project" value="UniProtKB-KW"/>
</dbReference>
<dbReference type="GO" id="GO:0008033">
    <property type="term" value="P:tRNA processing"/>
    <property type="evidence" value="ECO:0007669"/>
    <property type="project" value="UniProtKB-KW"/>
</dbReference>
<dbReference type="CDD" id="cd01285">
    <property type="entry name" value="nucleoside_deaminase"/>
    <property type="match status" value="1"/>
</dbReference>
<dbReference type="FunFam" id="3.40.140.10:FF:000062">
    <property type="entry name" value="tRNA-specific adenosine deaminase-like protein 3"/>
    <property type="match status" value="1"/>
</dbReference>
<dbReference type="Gene3D" id="3.40.140.10">
    <property type="entry name" value="Cytidine Deaminase, domain 2"/>
    <property type="match status" value="1"/>
</dbReference>
<dbReference type="InterPro" id="IPR002125">
    <property type="entry name" value="CMP_dCMP_dom"/>
</dbReference>
<dbReference type="InterPro" id="IPR016193">
    <property type="entry name" value="Cytidine_deaminase-like"/>
</dbReference>
<dbReference type="PANTHER" id="PTHR11079">
    <property type="entry name" value="CYTOSINE DEAMINASE FAMILY MEMBER"/>
    <property type="match status" value="1"/>
</dbReference>
<dbReference type="PANTHER" id="PTHR11079:SF156">
    <property type="entry name" value="INACTIVE TRNA-SPECIFIC ADENOSINE DEAMINASE-LIKE PROTEIN 3-RELATED"/>
    <property type="match status" value="1"/>
</dbReference>
<dbReference type="Pfam" id="PF00383">
    <property type="entry name" value="dCMP_cyt_deam_1"/>
    <property type="match status" value="1"/>
</dbReference>
<dbReference type="SUPFAM" id="SSF53927">
    <property type="entry name" value="Cytidine deaminase-like"/>
    <property type="match status" value="1"/>
</dbReference>
<dbReference type="PROSITE" id="PS51747">
    <property type="entry name" value="CYT_DCMP_DEAMINASES_2"/>
    <property type="match status" value="1"/>
</dbReference>
<feature type="chain" id="PRO_0000287661" description="Probable inactive tRNA-specific adenosine deaminase-like protein 3">
    <location>
        <begin position="1"/>
        <end position="336"/>
    </location>
</feature>
<feature type="domain" description="CMP/dCMP-type deaminase" evidence="2">
    <location>
        <begin position="167"/>
        <end position="322"/>
    </location>
</feature>
<feature type="binding site" evidence="1">
    <location>
        <position position="219"/>
    </location>
    <ligand>
        <name>Zn(2+)</name>
        <dbReference type="ChEBI" id="CHEBI:29105"/>
    </ligand>
</feature>
<feature type="binding site" evidence="1">
    <location>
        <position position="277"/>
    </location>
    <ligand>
        <name>Zn(2+)</name>
        <dbReference type="ChEBI" id="CHEBI:29105"/>
    </ligand>
</feature>
<feature type="binding site" evidence="1">
    <location>
        <position position="280"/>
    </location>
    <ligand>
        <name>Zn(2+)</name>
        <dbReference type="ChEBI" id="CHEBI:29105"/>
    </ligand>
</feature>
<feature type="sequence conflict" description="In Ref. 1; CAD43470/CAQ15728." evidence="3" ref="1">
    <original>K</original>
    <variation>R</variation>
    <location>
        <position position="8"/>
    </location>
</feature>
<feature type="sequence conflict" description="In Ref. 1; CAD43470/CAQ15728." evidence="3" ref="1">
    <original>C</original>
    <variation>S</variation>
    <location>
        <position position="94"/>
    </location>
</feature>
<feature type="sequence conflict" description="In Ref. 1; CAQ15728." evidence="3" ref="1">
    <original>N</original>
    <variation>K</variation>
    <location>
        <position position="238"/>
    </location>
</feature>